<protein>
    <recommendedName>
        <fullName>Protein phosphatase Mn(2+)-dependent 1K</fullName>
        <ecNumber evidence="7 8 10">3.1.3.16</ecNumber>
    </recommendedName>
    <alternativeName>
        <fullName evidence="17">Branched-chain alpha-ketoacid dehydrogenase phosphatase</fullName>
        <shortName evidence="19">BCKDH</shortName>
        <shortName evidence="17">BDP</shortName>
        <ecNumber evidence="7 10">3.1.3.52</ecNumber>
    </alternativeName>
    <alternativeName>
        <fullName>PP2C domain-containing protein phosphatase 1K</fullName>
    </alternativeName>
    <alternativeName>
        <fullName>PP2C-like mitochondrial protein</fullName>
    </alternativeName>
    <alternativeName>
        <fullName>PP2C-type mitochondrial phosphoprotein phosphatase</fullName>
        <shortName>PTMP</shortName>
    </alternativeName>
    <alternativeName>
        <fullName evidence="16">Protein phosphatase 2C family member</fullName>
    </alternativeName>
    <alternativeName>
        <fullName>Protein phosphatase 2C isoform kappa</fullName>
        <shortName>PP2C-kappa</shortName>
    </alternativeName>
    <alternativeName>
        <fullName>[3-methyl-2-oxobutanoate dehydrogenase (2-methylpropanoyl-transferring)]-phosphatase, mitochondrial</fullName>
    </alternativeName>
</protein>
<comment type="function">
    <text evidence="7 8 9 10 11 12 14">Serine/threonine-protein phosphatase component of macronutrients metabolism. Forms a functional kinase and phosphatase pair with BCKDK, serving as a metabolic regulatory node that coordinates branched-chain amino acids (BCAAs) with glucose and lipid metabolism via two distinct phosphoprotein targets: mitochondrial BCKDHA subunit of the branched-chain alpha-ketoacid dehydrogenase (BCKDH) complex and cytosolic ACLY, a lipogenic enzyme of Krebs cycle (PubMed:17336929, PubMed:17374715, PubMed:19411760, PubMed:22291014, PubMed:22589535, PubMed:23086801, PubMed:29779826). At high levels of branched-chain ketoacids, dephosphorylates and activates mitochondrial BCKDH complex, a multisubunit complex consisting of three multimeric components each involved in different steps of BCAA catabolism: E1 composed of BCKDHA and BCKDHB, E2 core composed of DBT monomers, and E3 composed of DLD monomers. Tightly associates with the E2 component of BCKDH complex and dephosphorylates BCKDHA on Ser-337 (PubMed:17336929, PubMed:17374715, PubMed:19411760, PubMed:22291014, PubMed:22589535, PubMed:23086801, PubMed:29779826). Regulates the reversible phosphorylation of ACLY in response to changes in cellular carbohydrate abundance such as occurs during fasting to feeding metabolic transition. At fasting state, appears to dephosphorylate ACLY on Ser-455 and inactivate it. Refeeding stimulates MLXIPL/ChREBP transcription factor, leading to increased BCKDK to PPM1K expression ratio, phosphorylation and activation of ACLY that ultimately results in the generation of malonyl-CoA and oxaloacetate immediate substrates of de novo lipogenesis and gluconeogenesis, respectively (PubMed:29779826). Recognizes phosphosites having SxS or RxxS motifs and strictly depends on Mn(2+) ions for the phosphatase activity (PubMed:29779826). Regulates Ca(2+)-induced opening of mitochondrial transition pore and apoptotic cell death (PubMed:17374715).</text>
</comment>
<comment type="catalytic activity">
    <reaction evidence="7 10 11">
        <text>O-phospho-L-seryl-[3-methyl-2-oxobutanoate dehydrogenase] + H2O = L-seryl-[3-methyl-2-oxobutanoate dehydrogenase] + phosphate</text>
        <dbReference type="Rhea" id="RHEA:77247"/>
        <dbReference type="Rhea" id="RHEA-COMP:13695"/>
        <dbReference type="Rhea" id="RHEA-COMP:13696"/>
        <dbReference type="ChEBI" id="CHEBI:15377"/>
        <dbReference type="ChEBI" id="CHEBI:29999"/>
        <dbReference type="ChEBI" id="CHEBI:43474"/>
        <dbReference type="ChEBI" id="CHEBI:83421"/>
        <dbReference type="EC" id="3.1.3.52"/>
    </reaction>
    <physiologicalReaction direction="left-to-right" evidence="7 10 11">
        <dbReference type="Rhea" id="RHEA:77248"/>
    </physiologicalReaction>
</comment>
<comment type="catalytic activity">
    <reaction evidence="7 10 14 22">
        <text>O-phospho-L-seryl-[protein] + H2O = L-seryl-[protein] + phosphate</text>
        <dbReference type="Rhea" id="RHEA:20629"/>
        <dbReference type="Rhea" id="RHEA-COMP:9863"/>
        <dbReference type="Rhea" id="RHEA-COMP:11604"/>
        <dbReference type="ChEBI" id="CHEBI:15377"/>
        <dbReference type="ChEBI" id="CHEBI:29999"/>
        <dbReference type="ChEBI" id="CHEBI:43474"/>
        <dbReference type="ChEBI" id="CHEBI:83421"/>
        <dbReference type="EC" id="3.1.3.16"/>
    </reaction>
    <physiologicalReaction direction="left-to-right" evidence="7 10 14 22">
        <dbReference type="Rhea" id="RHEA:20630"/>
    </physiologicalReaction>
</comment>
<comment type="cofactor">
    <cofactor evidence="7 8 10">
        <name>Mn(2+)</name>
        <dbReference type="ChEBI" id="CHEBI:29035"/>
    </cofactor>
    <text evidence="10">Binds 2 Mn(2+) ions per subunit.</text>
</comment>
<comment type="activity regulation">
    <text evidence="10">Up-regulated upon interaction with the 24-meric DBT/E2 core of the BCKDH complex. Inhibited by Mg(2+) and Ca(2+) ions likely by competing with Mn(2+) ions for binding to the same metal-binding sites.</text>
</comment>
<comment type="biophysicochemical properties">
    <kinetics>
        <KM evidence="10">57.8 uM for BCKDHA</KM>
        <KM evidence="10">8.9 mM for Mn(2+)</KM>
        <KM evidence="10">7.7 mM for p-nitrophenylphosphate</KM>
        <Vmax evidence="7">4.0 nmol/min/mg enzyme toward BCKDHA (at 37 degrees Celsius)</Vmax>
        <Vmax evidence="8">172.0 nmol/min/mg enzyme toward MBP (at 30 degrees Celsius)</Vmax>
        <text evidence="10">kcat is 17.2 min(-1) for BCKDHA. kcat is 43.2 sec(-1) for p-nitrophenylphosphate.</text>
    </kinetics>
    <phDependence>
        <text evidence="10">Optimum pH is 7.5.</text>
    </phDependence>
</comment>
<comment type="pathway">
    <text evidence="7 8 10 14">Protein modification.</text>
</comment>
<comment type="subunit">
    <text evidence="9 10 11">Monomer. Interacts with E1 and E2 components of the branched-chain alpha-ketoacid dehydrogenase (BCKDH) complex; this interaction requires colocalization in mitochondria. Interacts with BCKDHA but not with BCKDHB of the E1 component. Interacts with the 24-meric E2 core composed of DBT monomers with a 24:1 stoichiometry; the N-terminal region (residues 49-61) of PPM1K and C-terminal linker of the lipoyl domain of DBT (residues 145-160) are critical for this interaction, whereas the lipoyl prosthetic group is dispensable (PubMed:19411760, PubMed:22291014, PubMed:22589535). Competes with BCKDK for binding to the E2 core; this interaction is modulated by branched-chain alpha-keto acids. At steady state, BCKDH holoenzyme preferentially binds BCKDK and BCKDHA is phosphorylated. In response to high levels of branched-chain alpha-keto acids, the inhibitory BCKDK is replaced by activating PPM1K leading to BCKDHA dephosphorylation and BCAA degradation (PubMed:22589535).</text>
</comment>
<comment type="interaction">
    <interactant intactId="EBI-3923368">
        <id>Q8N3J5</id>
    </interactant>
    <interactant intactId="EBI-514538">
        <id>Q13490</id>
        <label>BIRC2</label>
    </interactant>
    <organismsDiffer>false</organismsDiffer>
    <experiments>6</experiments>
</comment>
<comment type="interaction">
    <interactant intactId="EBI-3923368">
        <id>Q8N3J5</id>
    </interactant>
    <interactant intactId="EBI-7116203">
        <id>O75031</id>
        <label>HSF2BP</label>
    </interactant>
    <organismsDiffer>false</organismsDiffer>
    <experiments>3</experiments>
</comment>
<comment type="interaction">
    <interactant intactId="EBI-3923368">
        <id>Q8N3J5</id>
    </interactant>
    <interactant intactId="EBI-739552">
        <id>P43364</id>
        <label>MAGEA11</label>
    </interactant>
    <organismsDiffer>false</organismsDiffer>
    <experiments>3</experiments>
</comment>
<comment type="interaction">
    <interactant intactId="EBI-3923368">
        <id>Q8N3J5</id>
    </interactant>
    <interactant intactId="EBI-7950783">
        <id>Q96JP2</id>
        <label>MYO15B</label>
    </interactant>
    <organismsDiffer>false</organismsDiffer>
    <experiments>3</experiments>
</comment>
<comment type="interaction">
    <interactant intactId="EBI-3923368">
        <id>Q8N3J5</id>
    </interactant>
    <interactant intactId="EBI-741158">
        <id>Q96HA8</id>
        <label>NTAQ1</label>
    </interactant>
    <organismsDiffer>false</organismsDiffer>
    <experiments>3</experiments>
</comment>
<comment type="interaction">
    <interactant intactId="EBI-3923368">
        <id>Q8N3J5</id>
    </interactant>
    <interactant intactId="EBI-11524408">
        <id>Q5T124-6</id>
        <label>UBXN11</label>
    </interactant>
    <organismsDiffer>false</organismsDiffer>
    <experiments>3</experiments>
</comment>
<comment type="interaction">
    <interactant intactId="EBI-3923368">
        <id>Q8N3J5</id>
    </interactant>
    <interactant intactId="EBI-517127">
        <id>P98170</id>
        <label>XIAP</label>
    </interactant>
    <organismsDiffer>false</organismsDiffer>
    <experiments>3</experiments>
</comment>
<comment type="interaction">
    <interactant intactId="EBI-3923368">
        <id>Q8N3J5</id>
    </interactant>
    <interactant intactId="EBI-11741890">
        <id>Q86VK4-3</id>
        <label>ZNF410</label>
    </interactant>
    <organismsDiffer>false</organismsDiffer>
    <experiments>3</experiments>
</comment>
<comment type="subcellular location">
    <subcellularLocation>
        <location evidence="7 8 12">Mitochondrion matrix</location>
    </subcellularLocation>
    <text evidence="1">Detected in the cytosolic compartment of liver cells.</text>
</comment>
<comment type="alternative products">
    <event type="alternative splicing"/>
    <isoform>
        <id>Q8N3J5-1</id>
        <name>1</name>
        <sequence type="displayed"/>
    </isoform>
    <isoform>
        <id>Q8N3J5-2</id>
        <name>2</name>
        <sequence type="described" ref="VSP_023158 VSP_023159"/>
    </isoform>
    <isoform>
        <id>Q8N3J5-3</id>
        <name>3</name>
        <sequence type="described" ref="VSP_023156 VSP_023157"/>
    </isoform>
</comment>
<comment type="disease" evidence="12">
    <disease id="DI-03756">
        <name>Maple syrup urine disease, mild variant</name>
        <acronym>MSUDMV</acronym>
        <description>A mild form of maple syrup urine disease, a metabolic disorder due to an enzyme defect in the catabolic pathway of the branched-chain amino acids leucine, isoleucine, and valine. Accumulation of these 3 amino acids and their corresponding keto acids leads to encephalopathy and progressive neurodegeneration. Clinical features include mental and physical retardation, feeding problems, and a maple syrup odor to the urine. The keto acids of the branched-chain amino acids are present in the urine. If untreated, maple syrup urine disease can lead to seizures, coma, and death. The disease is often classified by its pattern of signs and symptoms. The most common and severe form of the disease is the classic type, which becomes apparent soon after birth. Variant forms of the disorder become apparent later in infancy or childhood and are typically milder, but they still involve developmental delay and other medical problems if not treated. MSUDMV is characterized by increased plasma levels of branched-chain amino acids (BCAA) apparent at birth. Treatment with a low-protein diet free of BCAA can result in normal psychomotor development and lack of metabolic episodes.</description>
        <dbReference type="MIM" id="615135"/>
    </disease>
    <text>The gene represented in this entry is involved in disease pathogenesis.</text>
</comment>
<comment type="similarity">
    <text evidence="21">Belongs to the PP2C family.</text>
</comment>
<comment type="caution">
    <text evidence="21">PubMed:18058037 has crystallized PPM1K in the presence of magnesium ions. However, PubMed:17336929 reported that no activity toward p-nitrophenylphosphate was seen in the absence of manganese ions and magnesium could not substitute for manganese.</text>
</comment>
<name>PPM1K_HUMAN</name>
<keyword id="KW-0002">3D-structure</keyword>
<keyword id="KW-0025">Alternative splicing</keyword>
<keyword id="KW-0378">Hydrolase</keyword>
<keyword id="KW-0464">Manganese</keyword>
<keyword id="KW-0479">Metal-binding</keyword>
<keyword id="KW-0496">Mitochondrion</keyword>
<keyword id="KW-0597">Phosphoprotein</keyword>
<keyword id="KW-0904">Protein phosphatase</keyword>
<keyword id="KW-1267">Proteomics identification</keyword>
<keyword id="KW-1185">Reference proteome</keyword>
<keyword id="KW-0809">Transit peptide</keyword>
<gene>
    <name evidence="18 24" type="primary">PPM1K</name>
    <name evidence="16" type="synonym">PP2CM</name>
</gene>
<sequence>MSTAALITLVRSGGNQVRRRVLLSSRLLQDDRRVTPTCHSSTSEPRCSRFDPDGSGSPATWDNFGIWDNRIDEPILLPPSIKYGKPIPKISLENVGCASQIGKRKENEDRFDFAQLTDEVLYFAVYDGHGGPAAADFCHTHMEKCIMDLLPKEKNLETLLTLAFLEIDKAFSSHARLSADATLLTSGTTATVALLRDGIELVVASVGDSRAILCRKGKPMKLTIDHTPERKDEKERIKKCGGFVAWNSLGQPHVNGRLAMTRSIGDLDLKTSGVIAEPETKRIKLHHADDSFLVLTTDGINFMVNSQEICDFVNQCHDPNEAAHAVTEQAIQYGTEDNSTAVVVPFGAWGKYKNSEINFSFSRSFASSGRWA</sequence>
<evidence type="ECO:0000250" key="1">
    <source>
        <dbReference type="UniProtKB" id="A6K136"/>
    </source>
</evidence>
<evidence type="ECO:0000250" key="2">
    <source>
        <dbReference type="UniProtKB" id="Q8BXN7"/>
    </source>
</evidence>
<evidence type="ECO:0000255" key="3"/>
<evidence type="ECO:0000255" key="4">
    <source>
        <dbReference type="PROSITE-ProRule" id="PRU01082"/>
    </source>
</evidence>
<evidence type="ECO:0000256" key="5">
    <source>
        <dbReference type="SAM" id="MobiDB-lite"/>
    </source>
</evidence>
<evidence type="ECO:0000269" key="6">
    <source>
    </source>
</evidence>
<evidence type="ECO:0000269" key="7">
    <source>
    </source>
</evidence>
<evidence type="ECO:0000269" key="8">
    <source>
    </source>
</evidence>
<evidence type="ECO:0000269" key="9">
    <source>
    </source>
</evidence>
<evidence type="ECO:0000269" key="10">
    <source>
    </source>
</evidence>
<evidence type="ECO:0000269" key="11">
    <source>
    </source>
</evidence>
<evidence type="ECO:0000269" key="12">
    <source>
    </source>
</evidence>
<evidence type="ECO:0000269" key="13">
    <source>
    </source>
</evidence>
<evidence type="ECO:0000269" key="14">
    <source>
    </source>
</evidence>
<evidence type="ECO:0000303" key="15">
    <source>
    </source>
</evidence>
<evidence type="ECO:0000303" key="16">
    <source>
    </source>
</evidence>
<evidence type="ECO:0000303" key="17">
    <source>
    </source>
</evidence>
<evidence type="ECO:0000303" key="18">
    <source>
    </source>
</evidence>
<evidence type="ECO:0000303" key="19">
    <source>
    </source>
</evidence>
<evidence type="ECO:0000303" key="20">
    <source ref="2"/>
</evidence>
<evidence type="ECO:0000305" key="21"/>
<evidence type="ECO:0000305" key="22">
    <source>
    </source>
</evidence>
<evidence type="ECO:0000305" key="23">
    <source>
    </source>
</evidence>
<evidence type="ECO:0000312" key="24">
    <source>
        <dbReference type="HGNC" id="HGNC:25415"/>
    </source>
</evidence>
<evidence type="ECO:0007744" key="25">
    <source>
        <dbReference type="PDB" id="2IQ1"/>
    </source>
</evidence>
<evidence type="ECO:0007744" key="26">
    <source>
        <dbReference type="PDB" id="4DA1"/>
    </source>
</evidence>
<evidence type="ECO:0007829" key="27">
    <source>
        <dbReference type="PDB" id="2IQ1"/>
    </source>
</evidence>
<evidence type="ECO:0007829" key="28">
    <source>
        <dbReference type="PDB" id="6AK7"/>
    </source>
</evidence>
<reference key="1">
    <citation type="journal article" date="2007" name="Genes Dev.">
        <title>A novel mitochondrial matrix serine/threonine protein phosphatase regulates the mitochondria permeability transition pore and is essential for cellular survival and development.</title>
        <authorList>
            <person name="Lu G."/>
            <person name="Ren S."/>
            <person name="Korge P."/>
            <person name="Choi J."/>
            <person name="Dong Y."/>
            <person name="Weiss J."/>
            <person name="Koehler C."/>
            <person name="Chen J.-N."/>
            <person name="Wang Y."/>
        </authorList>
    </citation>
    <scope>NUCLEOTIDE SEQUENCE [MRNA] (ISOFORM 1)</scope>
    <scope>FUNCTION</scope>
    <scope>CATALYTIC ACTIVITY</scope>
    <scope>BIOPHYSICOCHEMICAL PROPERTIES</scope>
    <scope>COFACTOR</scope>
    <scope>SUBCELLULAR LOCATION</scope>
    <scope>MUTAGENESIS OF ASP-298</scope>
    <scope>PATHWAY</scope>
</reference>
<reference key="2">
    <citation type="submission" date="2002-10" db="EMBL/GenBank/DDBJ databases">
        <title>Cloning and characterization of a novel human PP2C gene from fetal brain.</title>
        <authorList>
            <person name="Mao Y."/>
            <person name="Xie Y."/>
            <person name="Dai J."/>
        </authorList>
    </citation>
    <scope>NUCLEOTIDE SEQUENCE [MRNA] (ISOFORMS 1 AND 2)</scope>
</reference>
<reference key="3">
    <citation type="journal article" date="2007" name="Biochem. Biophys. Res. Commun.">
        <title>Identification of a novel PP2C-type mitochondrial phosphatase.</title>
        <authorList>
            <person name="Joshi M.A."/>
            <person name="Jeoung N.H."/>
            <person name="Popov K.M."/>
            <person name="Harris R.A."/>
        </authorList>
    </citation>
    <scope>NUCLEOTIDE SEQUENCE [MRNA] (ISOFORM 1)</scope>
    <scope>FUNCTION</scope>
    <scope>CATALYTIC ACTIVITY</scope>
    <scope>BIOPHYSICOCHEMICAL PROPERTIES</scope>
    <scope>COFACTOR</scope>
    <scope>SUBCELLULAR LOCATION</scope>
    <scope>PATHWAY</scope>
</reference>
<reference key="4">
    <citation type="submission" date="2003-10" db="EMBL/GenBank/DDBJ databases">
        <title>Protein phosphatase 2C kappa is upregulated in heart failure and attenuates agonist-induced cardiomyocyte hypertrophy.</title>
        <authorList>
            <person name="Xu J."/>
            <person name="Stagliano N."/>
            <person name="Deponte J. III"/>
            <person name="Rodrigue-Way A."/>
            <person name="Golden S."/>
            <person name="Katz S."/>
            <person name="Jeyaseelan R."/>
            <person name="Donoghue M."/>
            <person name="Meyers R."/>
            <person name="Gottfried S."/>
            <person name="Wysong D."/>
            <person name="McGovern K."/>
            <person name="Pollman M."/>
            <person name="Breitbart R.E."/>
            <person name="Acton S."/>
        </authorList>
    </citation>
    <scope>NUCLEOTIDE SEQUENCE [MRNA] (ISOFORM 1)</scope>
</reference>
<reference key="5">
    <citation type="journal article" date="2004" name="Nat. Genet.">
        <title>Complete sequencing and characterization of 21,243 full-length human cDNAs.</title>
        <authorList>
            <person name="Ota T."/>
            <person name="Suzuki Y."/>
            <person name="Nishikawa T."/>
            <person name="Otsuki T."/>
            <person name="Sugiyama T."/>
            <person name="Irie R."/>
            <person name="Wakamatsu A."/>
            <person name="Hayashi K."/>
            <person name="Sato H."/>
            <person name="Nagai K."/>
            <person name="Kimura K."/>
            <person name="Makita H."/>
            <person name="Sekine M."/>
            <person name="Obayashi M."/>
            <person name="Nishi T."/>
            <person name="Shibahara T."/>
            <person name="Tanaka T."/>
            <person name="Ishii S."/>
            <person name="Yamamoto J."/>
            <person name="Saito K."/>
            <person name="Kawai Y."/>
            <person name="Isono Y."/>
            <person name="Nakamura Y."/>
            <person name="Nagahari K."/>
            <person name="Murakami K."/>
            <person name="Yasuda T."/>
            <person name="Iwayanagi T."/>
            <person name="Wagatsuma M."/>
            <person name="Shiratori A."/>
            <person name="Sudo H."/>
            <person name="Hosoiri T."/>
            <person name="Kaku Y."/>
            <person name="Kodaira H."/>
            <person name="Kondo H."/>
            <person name="Sugawara M."/>
            <person name="Takahashi M."/>
            <person name="Kanda K."/>
            <person name="Yokoi T."/>
            <person name="Furuya T."/>
            <person name="Kikkawa E."/>
            <person name="Omura Y."/>
            <person name="Abe K."/>
            <person name="Kamihara K."/>
            <person name="Katsuta N."/>
            <person name="Sato K."/>
            <person name="Tanikawa M."/>
            <person name="Yamazaki M."/>
            <person name="Ninomiya K."/>
            <person name="Ishibashi T."/>
            <person name="Yamashita H."/>
            <person name="Murakawa K."/>
            <person name="Fujimori K."/>
            <person name="Tanai H."/>
            <person name="Kimata M."/>
            <person name="Watanabe M."/>
            <person name="Hiraoka S."/>
            <person name="Chiba Y."/>
            <person name="Ishida S."/>
            <person name="Ono Y."/>
            <person name="Takiguchi S."/>
            <person name="Watanabe S."/>
            <person name="Yosida M."/>
            <person name="Hotuta T."/>
            <person name="Kusano J."/>
            <person name="Kanehori K."/>
            <person name="Takahashi-Fujii A."/>
            <person name="Hara H."/>
            <person name="Tanase T.-O."/>
            <person name="Nomura Y."/>
            <person name="Togiya S."/>
            <person name="Komai F."/>
            <person name="Hara R."/>
            <person name="Takeuchi K."/>
            <person name="Arita M."/>
            <person name="Imose N."/>
            <person name="Musashino K."/>
            <person name="Yuuki H."/>
            <person name="Oshima A."/>
            <person name="Sasaki N."/>
            <person name="Aotsuka S."/>
            <person name="Yoshikawa Y."/>
            <person name="Matsunawa H."/>
            <person name="Ichihara T."/>
            <person name="Shiohata N."/>
            <person name="Sano S."/>
            <person name="Moriya S."/>
            <person name="Momiyama H."/>
            <person name="Satoh N."/>
            <person name="Takami S."/>
            <person name="Terashima Y."/>
            <person name="Suzuki O."/>
            <person name="Nakagawa S."/>
            <person name="Senoh A."/>
            <person name="Mizoguchi H."/>
            <person name="Goto Y."/>
            <person name="Shimizu F."/>
            <person name="Wakebe H."/>
            <person name="Hishigaki H."/>
            <person name="Watanabe T."/>
            <person name="Sugiyama A."/>
            <person name="Takemoto M."/>
            <person name="Kawakami B."/>
            <person name="Yamazaki M."/>
            <person name="Watanabe K."/>
            <person name="Kumagai A."/>
            <person name="Itakura S."/>
            <person name="Fukuzumi Y."/>
            <person name="Fujimori Y."/>
            <person name="Komiyama M."/>
            <person name="Tashiro H."/>
            <person name="Tanigami A."/>
            <person name="Fujiwara T."/>
            <person name="Ono T."/>
            <person name="Yamada K."/>
            <person name="Fujii Y."/>
            <person name="Ozaki K."/>
            <person name="Hirao M."/>
            <person name="Ohmori Y."/>
            <person name="Kawabata A."/>
            <person name="Hikiji T."/>
            <person name="Kobatake N."/>
            <person name="Inagaki H."/>
            <person name="Ikema Y."/>
            <person name="Okamoto S."/>
            <person name="Okitani R."/>
            <person name="Kawakami T."/>
            <person name="Noguchi S."/>
            <person name="Itoh T."/>
            <person name="Shigeta K."/>
            <person name="Senba T."/>
            <person name="Matsumura K."/>
            <person name="Nakajima Y."/>
            <person name="Mizuno T."/>
            <person name="Morinaga M."/>
            <person name="Sasaki M."/>
            <person name="Togashi T."/>
            <person name="Oyama M."/>
            <person name="Hata H."/>
            <person name="Watanabe M."/>
            <person name="Komatsu T."/>
            <person name="Mizushima-Sugano J."/>
            <person name="Satoh T."/>
            <person name="Shirai Y."/>
            <person name="Takahashi Y."/>
            <person name="Nakagawa K."/>
            <person name="Okumura K."/>
            <person name="Nagase T."/>
            <person name="Nomura N."/>
            <person name="Kikuchi H."/>
            <person name="Masuho Y."/>
            <person name="Yamashita R."/>
            <person name="Nakai K."/>
            <person name="Yada T."/>
            <person name="Nakamura Y."/>
            <person name="Ohara O."/>
            <person name="Isogai T."/>
            <person name="Sugano S."/>
        </authorList>
    </citation>
    <scope>NUCLEOTIDE SEQUENCE [LARGE SCALE MRNA] (ISOFORM 1)</scope>
    <source>
        <tissue>Cerebellum</tissue>
        <tissue>Testis</tissue>
    </source>
</reference>
<reference key="6">
    <citation type="journal article" date="2007" name="BMC Genomics">
        <title>The full-ORF clone resource of the German cDNA consortium.</title>
        <authorList>
            <person name="Bechtel S."/>
            <person name="Rosenfelder H."/>
            <person name="Duda A."/>
            <person name="Schmidt C.P."/>
            <person name="Ernst U."/>
            <person name="Wellenreuther R."/>
            <person name="Mehrle A."/>
            <person name="Schuster C."/>
            <person name="Bahr A."/>
            <person name="Bloecker H."/>
            <person name="Heubner D."/>
            <person name="Hoerlein A."/>
            <person name="Michel G."/>
            <person name="Wedler H."/>
            <person name="Koehrer K."/>
            <person name="Ottenwaelder B."/>
            <person name="Poustka A."/>
            <person name="Wiemann S."/>
            <person name="Schupp I."/>
        </authorList>
    </citation>
    <scope>NUCLEOTIDE SEQUENCE [LARGE SCALE MRNA] (ISOFORM 1)</scope>
    <source>
        <tissue>Amygdala</tissue>
        <tissue>Lymph node</tissue>
    </source>
</reference>
<reference key="7">
    <citation type="journal article" date="2005" name="Nature">
        <title>Generation and annotation of the DNA sequences of human chromosomes 2 and 4.</title>
        <authorList>
            <person name="Hillier L.W."/>
            <person name="Graves T.A."/>
            <person name="Fulton R.S."/>
            <person name="Fulton L.A."/>
            <person name="Pepin K.H."/>
            <person name="Minx P."/>
            <person name="Wagner-McPherson C."/>
            <person name="Layman D."/>
            <person name="Wylie K."/>
            <person name="Sekhon M."/>
            <person name="Becker M.C."/>
            <person name="Fewell G.A."/>
            <person name="Delehaunty K.D."/>
            <person name="Miner T.L."/>
            <person name="Nash W.E."/>
            <person name="Kremitzki C."/>
            <person name="Oddy L."/>
            <person name="Du H."/>
            <person name="Sun H."/>
            <person name="Bradshaw-Cordum H."/>
            <person name="Ali J."/>
            <person name="Carter J."/>
            <person name="Cordes M."/>
            <person name="Harris A."/>
            <person name="Isak A."/>
            <person name="van Brunt A."/>
            <person name="Nguyen C."/>
            <person name="Du F."/>
            <person name="Courtney L."/>
            <person name="Kalicki J."/>
            <person name="Ozersky P."/>
            <person name="Abbott S."/>
            <person name="Armstrong J."/>
            <person name="Belter E.A."/>
            <person name="Caruso L."/>
            <person name="Cedroni M."/>
            <person name="Cotton M."/>
            <person name="Davidson T."/>
            <person name="Desai A."/>
            <person name="Elliott G."/>
            <person name="Erb T."/>
            <person name="Fronick C."/>
            <person name="Gaige T."/>
            <person name="Haakenson W."/>
            <person name="Haglund K."/>
            <person name="Holmes A."/>
            <person name="Harkins R."/>
            <person name="Kim K."/>
            <person name="Kruchowski S.S."/>
            <person name="Strong C.M."/>
            <person name="Grewal N."/>
            <person name="Goyea E."/>
            <person name="Hou S."/>
            <person name="Levy A."/>
            <person name="Martinka S."/>
            <person name="Mead K."/>
            <person name="McLellan M.D."/>
            <person name="Meyer R."/>
            <person name="Randall-Maher J."/>
            <person name="Tomlinson C."/>
            <person name="Dauphin-Kohlberg S."/>
            <person name="Kozlowicz-Reilly A."/>
            <person name="Shah N."/>
            <person name="Swearengen-Shahid S."/>
            <person name="Snider J."/>
            <person name="Strong J.T."/>
            <person name="Thompson J."/>
            <person name="Yoakum M."/>
            <person name="Leonard S."/>
            <person name="Pearman C."/>
            <person name="Trani L."/>
            <person name="Radionenko M."/>
            <person name="Waligorski J.E."/>
            <person name="Wang C."/>
            <person name="Rock S.M."/>
            <person name="Tin-Wollam A.-M."/>
            <person name="Maupin R."/>
            <person name="Latreille P."/>
            <person name="Wendl M.C."/>
            <person name="Yang S.-P."/>
            <person name="Pohl C."/>
            <person name="Wallis J.W."/>
            <person name="Spieth J."/>
            <person name="Bieri T.A."/>
            <person name="Berkowicz N."/>
            <person name="Nelson J.O."/>
            <person name="Osborne J."/>
            <person name="Ding L."/>
            <person name="Meyer R."/>
            <person name="Sabo A."/>
            <person name="Shotland Y."/>
            <person name="Sinha P."/>
            <person name="Wohldmann P.E."/>
            <person name="Cook L.L."/>
            <person name="Hickenbotham M.T."/>
            <person name="Eldred J."/>
            <person name="Williams D."/>
            <person name="Jones T.A."/>
            <person name="She X."/>
            <person name="Ciccarelli F.D."/>
            <person name="Izaurralde E."/>
            <person name="Taylor J."/>
            <person name="Schmutz J."/>
            <person name="Myers R.M."/>
            <person name="Cox D.R."/>
            <person name="Huang X."/>
            <person name="McPherson J.D."/>
            <person name="Mardis E.R."/>
            <person name="Clifton S.W."/>
            <person name="Warren W.C."/>
            <person name="Chinwalla A.T."/>
            <person name="Eddy S.R."/>
            <person name="Marra M.A."/>
            <person name="Ovcharenko I."/>
            <person name="Furey T.S."/>
            <person name="Miller W."/>
            <person name="Eichler E.E."/>
            <person name="Bork P."/>
            <person name="Suyama M."/>
            <person name="Torrents D."/>
            <person name="Waterston R.H."/>
            <person name="Wilson R.K."/>
        </authorList>
    </citation>
    <scope>NUCLEOTIDE SEQUENCE [LARGE SCALE GENOMIC DNA]</scope>
</reference>
<reference key="8">
    <citation type="submission" date="2005-07" db="EMBL/GenBank/DDBJ databases">
        <authorList>
            <person name="Mural R.J."/>
            <person name="Istrail S."/>
            <person name="Sutton G.G."/>
            <person name="Florea L."/>
            <person name="Halpern A.L."/>
            <person name="Mobarry C.M."/>
            <person name="Lippert R."/>
            <person name="Walenz B."/>
            <person name="Shatkay H."/>
            <person name="Dew I."/>
            <person name="Miller J.R."/>
            <person name="Flanigan M.J."/>
            <person name="Edwards N.J."/>
            <person name="Bolanos R."/>
            <person name="Fasulo D."/>
            <person name="Halldorsson B.V."/>
            <person name="Hannenhalli S."/>
            <person name="Turner R."/>
            <person name="Yooseph S."/>
            <person name="Lu F."/>
            <person name="Nusskern D.R."/>
            <person name="Shue B.C."/>
            <person name="Zheng X.H."/>
            <person name="Zhong F."/>
            <person name="Delcher A.L."/>
            <person name="Huson D.H."/>
            <person name="Kravitz S.A."/>
            <person name="Mouchard L."/>
            <person name="Reinert K."/>
            <person name="Remington K.A."/>
            <person name="Clark A.G."/>
            <person name="Waterman M.S."/>
            <person name="Eichler E.E."/>
            <person name="Adams M.D."/>
            <person name="Hunkapiller M.W."/>
            <person name="Myers E.W."/>
            <person name="Venter J.C."/>
        </authorList>
    </citation>
    <scope>NUCLEOTIDE SEQUENCE [LARGE SCALE GENOMIC DNA]</scope>
</reference>
<reference key="9">
    <citation type="journal article" date="2004" name="Genome Res.">
        <title>The status, quality, and expansion of the NIH full-length cDNA project: the Mammalian Gene Collection (MGC).</title>
        <authorList>
            <consortium name="The MGC Project Team"/>
        </authorList>
    </citation>
    <scope>NUCLEOTIDE SEQUENCE [LARGE SCALE MRNA] (ISOFORMS 1 AND 3)</scope>
    <scope>VARIANT LYS-94</scope>
    <source>
        <tissue>Pancreas</tissue>
        <tissue>Testis</tissue>
    </source>
</reference>
<reference key="10">
    <citation type="journal article" date="2009" name="J. Clin. Invest.">
        <title>Protein phosphatase 2Cm is a critical regulator of branched-chain amino acid catabolism in mice and cultured cells.</title>
        <authorList>
            <person name="Lu G."/>
            <person name="Sun H."/>
            <person name="She P."/>
            <person name="Youn J.Y."/>
            <person name="Warburton S."/>
            <person name="Ping P."/>
            <person name="Vondriska T.M."/>
            <person name="Cai H."/>
            <person name="Lynch C.J."/>
            <person name="Wang Y."/>
        </authorList>
    </citation>
    <scope>FUNCTION</scope>
    <scope>CATALYTIC ACTIVITY</scope>
    <scope>INTERACTION WITH DBT</scope>
    <scope>MUTAGENESIS OF HIS-129; ARG-236 AND ASP-298</scope>
</reference>
<reference key="11">
    <citation type="journal article" date="2012" name="J. Biol. Chem.">
        <title>Tissue-specific and nutrient regulation of the branched-chain alpha-keto acid dehydrogenase phosphatase, protein phosphatase 2Cm (PP2Cm).</title>
        <authorList>
            <person name="Zhou M."/>
            <person name="Lu G."/>
            <person name="Gao C."/>
            <person name="Wang Y."/>
            <person name="Sun H."/>
        </authorList>
    </citation>
    <scope>FUNCTION</scope>
    <scope>CATALYTIC ACTIVITY</scope>
    <scope>INTERACTION WITH DBT AND BCKDHA</scope>
    <scope>REGION</scope>
    <scope>CHARACTERIZATION OF VARIANTS LYS-94; THR-167 AND LYS-321</scope>
</reference>
<reference key="12">
    <citation type="journal article" date="2018" name="Cell Metab.">
        <title>The BCKDH Kinase and Phosphatase Integrate BCAA and Lipid Metabolism via Regulation of ATP-Citrate Lyase.</title>
        <authorList>
            <person name="White P.J."/>
            <person name="McGarrah R.W."/>
            <person name="Grimsrud P.A."/>
            <person name="Tso S.C."/>
            <person name="Yang W.H."/>
            <person name="Haldeman J.M."/>
            <person name="Grenier-Larouche T."/>
            <person name="An J."/>
            <person name="Lapworth A.L."/>
            <person name="Astapova I."/>
            <person name="Hannou S.A."/>
            <person name="George T."/>
            <person name="Arlotto M."/>
            <person name="Olson L.B."/>
            <person name="Lai M."/>
            <person name="Zhang G.F."/>
            <person name="Ilkayeva O."/>
            <person name="Herman M.A."/>
            <person name="Wynn R.M."/>
            <person name="Chuang D.T."/>
            <person name="Newgard C.B."/>
        </authorList>
    </citation>
    <scope>FUNCTION</scope>
    <scope>CATALYTIC ACTIVITY</scope>
    <scope>PATHWAY</scope>
</reference>
<reference key="13">
    <citation type="journal article" date="2007" name="J. Struct. Funct. Genomics">
        <title>Structural genomics of protein phosphatases.</title>
        <authorList>
            <person name="Almo S.C."/>
            <person name="Bonanno J.B."/>
            <person name="Sauder J.M."/>
            <person name="Emtage S."/>
            <person name="Dilorenzo T.P."/>
            <person name="Malashkevich V."/>
            <person name="Wasserman S.R."/>
            <person name="Swaminathan S."/>
            <person name="Eswaramoorthy S."/>
            <person name="Agarwal R."/>
            <person name="Kumaran D."/>
            <person name="Madegowda M."/>
            <person name="Ragumani S."/>
            <person name="Patskovsky Y."/>
            <person name="Alvarado J."/>
            <person name="Ramagopal U.A."/>
            <person name="Faber-Barata J."/>
            <person name="Chance M.R."/>
            <person name="Sali A."/>
            <person name="Fiser A."/>
            <person name="Zhang Z.Y."/>
            <person name="Lawrence D.S."/>
            <person name="Burley S.K."/>
        </authorList>
    </citation>
    <scope>X-RAY CRYSTALLOGRAPHY (2.25 ANGSTROMS) OF 89-351 IN COMPLEX WITH MG(2+)</scope>
    <scope>CAUTION</scope>
</reference>
<reference evidence="26" key="14">
    <citation type="journal article" date="2012" name="J. Biol. Chem.">
        <title>Structural and biochemical characterization of human mitochondrial branched-chain alpha-ketoacid dehydrogenase phosphatase.</title>
        <authorList>
            <person name="Wynn R.M."/>
            <person name="Li J."/>
            <person name="Brautigam C.A."/>
            <person name="Chuang J.L."/>
            <person name="Chuang D.T."/>
        </authorList>
    </citation>
    <scope>X-RAY CRYSTALLOGRAPHY (2.38 ANGSTROMS) OF 84-360</scope>
    <scope>COFACTOR</scope>
    <scope>INTERACTION WITH DBT</scope>
    <scope>FUNCTION</scope>
    <scope>CATALYTIC ACTIVITY</scope>
    <scope>BIOPHYSICOCHEMICAL PROPERTIES</scope>
    <scope>MUTAGENESIS OF ARG-104; ASP-109; ASP-127; HIS-129; ASP-298 AND ASP-337</scope>
    <scope>PATHWAY</scope>
</reference>
<reference key="15">
    <citation type="journal article" date="2012" name="Am. J. Hum. Genet.">
        <title>Mutations in ANO3 cause dominant craniocervical dystonia: ion channel implicated in pathogenesis.</title>
        <authorList>
            <person name="Charlesworth G."/>
            <person name="Plagnol V."/>
            <person name="Holmstroem K.M."/>
            <person name="Bras J."/>
            <person name="Sheerin U.M."/>
            <person name="Preza E."/>
            <person name="Rubio-Agusti I."/>
            <person name="Ryten M."/>
            <person name="Schneider S.A."/>
            <person name="Stamelou M."/>
            <person name="Trabzuni D."/>
            <person name="Abramov A.Y."/>
            <person name="Bhatia K.P."/>
            <person name="Wood N.W."/>
        </authorList>
    </citation>
    <scope>VARIANT HIS-26</scope>
</reference>
<reference key="16">
    <citation type="journal article" date="2013" name="Hum. Mutat.">
        <title>A novel regulatory defect in the branched-chain alpha-keto acid dehydrogenase complex due to a mutation in the PPM1K gene causes a mild variant phenotype of maple syrup urine disease.</title>
        <authorList>
            <person name="Oyarzabal A."/>
            <person name="Martinez-Pardo M."/>
            <person name="Merinero B."/>
            <person name="Navarrete R."/>
            <person name="Desviat L.R."/>
            <person name="Ugarte M."/>
            <person name="Rodriguez-Pombo P."/>
        </authorList>
    </citation>
    <scope>INVOLVEMENT IN MSUDMV</scope>
    <scope>FUNCTION</scope>
    <scope>SUBCELLULAR LOCATION</scope>
</reference>
<dbReference type="EC" id="3.1.3.16" evidence="7 8 10"/>
<dbReference type="EC" id="3.1.3.52" evidence="7 10"/>
<dbReference type="EMBL" id="AY157615">
    <property type="protein sequence ID" value="AAO17296.1"/>
    <property type="molecule type" value="mRNA"/>
</dbReference>
<dbReference type="EMBL" id="AF351614">
    <property type="protein sequence ID" value="AAN76514.1"/>
    <property type="molecule type" value="mRNA"/>
</dbReference>
<dbReference type="EMBL" id="AY994097">
    <property type="protein sequence ID" value="AAX77016.1"/>
    <property type="molecule type" value="mRNA"/>
</dbReference>
<dbReference type="EMBL" id="AY435431">
    <property type="protein sequence ID" value="AAR06213.1"/>
    <property type="molecule type" value="mRNA"/>
</dbReference>
<dbReference type="EMBL" id="AK054678">
    <property type="protein sequence ID" value="BAB70790.1"/>
    <property type="molecule type" value="mRNA"/>
</dbReference>
<dbReference type="EMBL" id="AK314417">
    <property type="protein sequence ID" value="BAG37038.1"/>
    <property type="molecule type" value="mRNA"/>
</dbReference>
<dbReference type="EMBL" id="AL834167">
    <property type="protein sequence ID" value="CAD38869.2"/>
    <property type="molecule type" value="mRNA"/>
</dbReference>
<dbReference type="EMBL" id="AL834271">
    <property type="protein sequence ID" value="CAD38946.1"/>
    <property type="molecule type" value="mRNA"/>
</dbReference>
<dbReference type="EMBL" id="AC107067">
    <property type="protein sequence ID" value="AAY41021.1"/>
    <property type="molecule type" value="Genomic_DNA"/>
</dbReference>
<dbReference type="EMBL" id="AC108213">
    <property type="status" value="NOT_ANNOTATED_CDS"/>
    <property type="molecule type" value="Genomic_DNA"/>
</dbReference>
<dbReference type="EMBL" id="CH471057">
    <property type="protein sequence ID" value="EAX06016.1"/>
    <property type="molecule type" value="Genomic_DNA"/>
</dbReference>
<dbReference type="EMBL" id="BC020850">
    <property type="protein sequence ID" value="AAH20850.1"/>
    <property type="status" value="ALT_TERM"/>
    <property type="molecule type" value="mRNA"/>
</dbReference>
<dbReference type="EMBL" id="BC037552">
    <property type="protein sequence ID" value="AAH37552.1"/>
    <property type="molecule type" value="mRNA"/>
</dbReference>
<dbReference type="EMBL" id="BC041350">
    <property type="protein sequence ID" value="AAH41350.1"/>
    <property type="molecule type" value="mRNA"/>
</dbReference>
<dbReference type="CCDS" id="CCDS3629.1">
    <molecule id="Q8N3J5-1"/>
</dbReference>
<dbReference type="RefSeq" id="NP_689755.3">
    <molecule id="Q8N3J5-1"/>
    <property type="nucleotide sequence ID" value="NM_152542.4"/>
</dbReference>
<dbReference type="RefSeq" id="XP_006714174.1">
    <molecule id="Q8N3J5-1"/>
    <property type="nucleotide sequence ID" value="XM_006714111.5"/>
</dbReference>
<dbReference type="RefSeq" id="XP_016863292.1">
    <molecule id="Q8N3J5-1"/>
    <property type="nucleotide sequence ID" value="XM_017007803.3"/>
</dbReference>
<dbReference type="RefSeq" id="XP_054205018.1">
    <molecule id="Q8N3J5-1"/>
    <property type="nucleotide sequence ID" value="XM_054349043.1"/>
</dbReference>
<dbReference type="RefSeq" id="XP_054205019.1">
    <molecule id="Q8N3J5-1"/>
    <property type="nucleotide sequence ID" value="XM_054349044.1"/>
</dbReference>
<dbReference type="PDB" id="2IQ1">
    <property type="method" value="X-ray"/>
    <property type="resolution" value="2.25 A"/>
    <property type="chains" value="A=89-351"/>
</dbReference>
<dbReference type="PDB" id="4DA1">
    <property type="method" value="X-ray"/>
    <property type="resolution" value="2.38 A"/>
    <property type="chains" value="A=84-360"/>
</dbReference>
<dbReference type="PDB" id="6AK7">
    <property type="method" value="X-ray"/>
    <property type="resolution" value="2.60 A"/>
    <property type="chains" value="A=90-349"/>
</dbReference>
<dbReference type="PDBsum" id="2IQ1"/>
<dbReference type="PDBsum" id="4DA1"/>
<dbReference type="PDBsum" id="6AK7"/>
<dbReference type="SMR" id="Q8N3J5"/>
<dbReference type="BioGRID" id="127472">
    <property type="interactions" value="54"/>
</dbReference>
<dbReference type="FunCoup" id="Q8N3J5">
    <property type="interactions" value="625"/>
</dbReference>
<dbReference type="IntAct" id="Q8N3J5">
    <property type="interactions" value="38"/>
</dbReference>
<dbReference type="MINT" id="Q8N3J5"/>
<dbReference type="STRING" id="9606.ENSP00000477341"/>
<dbReference type="DEPOD" id="PPM1K"/>
<dbReference type="iPTMnet" id="Q8N3J5"/>
<dbReference type="PhosphoSitePlus" id="Q8N3J5"/>
<dbReference type="BioMuta" id="PPM1K"/>
<dbReference type="DMDM" id="74750962"/>
<dbReference type="jPOST" id="Q8N3J5"/>
<dbReference type="MassIVE" id="Q8N3J5"/>
<dbReference type="PaxDb" id="9606-ENSP00000477341"/>
<dbReference type="PeptideAtlas" id="Q8N3J5"/>
<dbReference type="ProteomicsDB" id="71811">
    <molecule id="Q8N3J5-1"/>
</dbReference>
<dbReference type="ProteomicsDB" id="71812">
    <molecule id="Q8N3J5-2"/>
</dbReference>
<dbReference type="ProteomicsDB" id="71813">
    <molecule id="Q8N3J5-3"/>
</dbReference>
<dbReference type="Antibodypedia" id="14616">
    <property type="antibodies" value="156 antibodies from 28 providers"/>
</dbReference>
<dbReference type="DNASU" id="152926"/>
<dbReference type="Ensembl" id="ENST00000608933.6">
    <molecule id="Q8N3J5-1"/>
    <property type="protein sequence ID" value="ENSP00000477341.1"/>
    <property type="gene ID" value="ENSG00000163644.15"/>
</dbReference>
<dbReference type="GeneID" id="152926"/>
<dbReference type="KEGG" id="hsa:152926"/>
<dbReference type="MANE-Select" id="ENST00000608933.6">
    <property type="protein sequence ID" value="ENSP00000477341.1"/>
    <property type="RefSeq nucleotide sequence ID" value="NM_152542.5"/>
    <property type="RefSeq protein sequence ID" value="NP_689755.3"/>
</dbReference>
<dbReference type="UCSC" id="uc003hrm.6">
    <molecule id="Q8N3J5-1"/>
    <property type="organism name" value="human"/>
</dbReference>
<dbReference type="AGR" id="HGNC:25415"/>
<dbReference type="CTD" id="152926"/>
<dbReference type="DisGeNET" id="152926"/>
<dbReference type="GeneCards" id="PPM1K"/>
<dbReference type="HGNC" id="HGNC:25415">
    <property type="gene designation" value="PPM1K"/>
</dbReference>
<dbReference type="HPA" id="ENSG00000163644">
    <property type="expression patterns" value="Tissue enhanced (heart)"/>
</dbReference>
<dbReference type="MalaCards" id="PPM1K"/>
<dbReference type="MIM" id="611065">
    <property type="type" value="gene"/>
</dbReference>
<dbReference type="MIM" id="615135">
    <property type="type" value="phenotype"/>
</dbReference>
<dbReference type="neXtProt" id="NX_Q8N3J5"/>
<dbReference type="OpenTargets" id="ENSG00000163644"/>
<dbReference type="Orphanet" id="268162">
    <property type="disease" value="Intermediate maple syrup urine disease"/>
</dbReference>
<dbReference type="PharmGKB" id="PA134912083"/>
<dbReference type="VEuPathDB" id="HostDB:ENSG00000163644"/>
<dbReference type="eggNOG" id="KOG0698">
    <property type="taxonomic scope" value="Eukaryota"/>
</dbReference>
<dbReference type="GeneTree" id="ENSGT00940000156633"/>
<dbReference type="HOGENOM" id="CLU_013173_1_3_1"/>
<dbReference type="InParanoid" id="Q8N3J5"/>
<dbReference type="OMA" id="CHTHMKK"/>
<dbReference type="OrthoDB" id="416093at2759"/>
<dbReference type="PAN-GO" id="Q8N3J5">
    <property type="GO annotations" value="3 GO annotations based on evolutionary models"/>
</dbReference>
<dbReference type="PhylomeDB" id="Q8N3J5"/>
<dbReference type="TreeFam" id="TF354344"/>
<dbReference type="BRENDA" id="3.1.3.16">
    <property type="organism ID" value="2681"/>
</dbReference>
<dbReference type="BRENDA" id="3.1.3.52">
    <property type="organism ID" value="2681"/>
</dbReference>
<dbReference type="PathwayCommons" id="Q8N3J5"/>
<dbReference type="Reactome" id="R-HSA-70895">
    <property type="pathway name" value="Branched-chain amino acid catabolism"/>
</dbReference>
<dbReference type="Reactome" id="R-HSA-9912529">
    <property type="pathway name" value="H139Hfs13* PPM1K causes a mild variant of MSUD"/>
</dbReference>
<dbReference type="SignaLink" id="Q8N3J5"/>
<dbReference type="SIGNOR" id="Q8N3J5"/>
<dbReference type="BioGRID-ORCS" id="152926">
    <property type="hits" value="9 hits in 1171 CRISPR screens"/>
</dbReference>
<dbReference type="ChiTaRS" id="PPM1K">
    <property type="organism name" value="human"/>
</dbReference>
<dbReference type="EvolutionaryTrace" id="Q8N3J5"/>
<dbReference type="GeneWiki" id="PPM1K"/>
<dbReference type="GenomeRNAi" id="152926"/>
<dbReference type="Pharos" id="Q8N3J5">
    <property type="development level" value="Tbio"/>
</dbReference>
<dbReference type="PRO" id="PR:Q8N3J5"/>
<dbReference type="Proteomes" id="UP000005640">
    <property type="component" value="Chromosome 4"/>
</dbReference>
<dbReference type="RNAct" id="Q8N3J5">
    <property type="molecule type" value="protein"/>
</dbReference>
<dbReference type="Bgee" id="ENSG00000163644">
    <property type="expression patterns" value="Expressed in left ventricle myocardium and 193 other cell types or tissues"/>
</dbReference>
<dbReference type="ExpressionAtlas" id="Q8N3J5">
    <property type="expression patterns" value="baseline and differential"/>
</dbReference>
<dbReference type="GO" id="GO:0005759">
    <property type="term" value="C:mitochondrial matrix"/>
    <property type="evidence" value="ECO:0000250"/>
    <property type="project" value="UniProtKB"/>
</dbReference>
<dbReference type="GO" id="GO:0005739">
    <property type="term" value="C:mitochondrion"/>
    <property type="evidence" value="ECO:0000314"/>
    <property type="project" value="HPA"/>
</dbReference>
<dbReference type="GO" id="GO:0047385">
    <property type="term" value="F:[3-methyl-2-oxobutanoate dehydrogenase (lipoamide)]-phosphatase activity"/>
    <property type="evidence" value="ECO:0007669"/>
    <property type="project" value="RHEA"/>
</dbReference>
<dbReference type="GO" id="GO:0030145">
    <property type="term" value="F:manganese ion binding"/>
    <property type="evidence" value="ECO:0000314"/>
    <property type="project" value="UniProtKB"/>
</dbReference>
<dbReference type="GO" id="GO:0004722">
    <property type="term" value="F:protein serine/threonine phosphatase activity"/>
    <property type="evidence" value="ECO:0000314"/>
    <property type="project" value="UniProtKB"/>
</dbReference>
<dbReference type="GO" id="GO:0009083">
    <property type="term" value="P:branched-chain amino acid catabolic process"/>
    <property type="evidence" value="ECO:0000315"/>
    <property type="project" value="UniProtKB"/>
</dbReference>
<dbReference type="GO" id="GO:1902531">
    <property type="term" value="P:regulation of intracellular signal transduction"/>
    <property type="evidence" value="ECO:0000318"/>
    <property type="project" value="GO_Central"/>
</dbReference>
<dbReference type="GO" id="GO:1902108">
    <property type="term" value="P:regulation of mitochondrial membrane permeability involved in apoptotic process"/>
    <property type="evidence" value="ECO:0007669"/>
    <property type="project" value="Ensembl"/>
</dbReference>
<dbReference type="CDD" id="cd00143">
    <property type="entry name" value="PP2Cc"/>
    <property type="match status" value="1"/>
</dbReference>
<dbReference type="FunFam" id="3.60.40.10:FF:000033">
    <property type="entry name" value="Protein phosphatase 1K, mitochondrial"/>
    <property type="match status" value="1"/>
</dbReference>
<dbReference type="Gene3D" id="3.60.40.10">
    <property type="entry name" value="PPM-type phosphatase domain"/>
    <property type="match status" value="1"/>
</dbReference>
<dbReference type="InterPro" id="IPR015655">
    <property type="entry name" value="PP2C"/>
</dbReference>
<dbReference type="InterPro" id="IPR000222">
    <property type="entry name" value="PP2C_BS"/>
</dbReference>
<dbReference type="InterPro" id="IPR036457">
    <property type="entry name" value="PPM-type-like_dom_sf"/>
</dbReference>
<dbReference type="InterPro" id="IPR001932">
    <property type="entry name" value="PPM-type_phosphatase-like_dom"/>
</dbReference>
<dbReference type="PANTHER" id="PTHR47992">
    <property type="entry name" value="PROTEIN PHOSPHATASE"/>
    <property type="match status" value="1"/>
</dbReference>
<dbReference type="Pfam" id="PF00481">
    <property type="entry name" value="PP2C"/>
    <property type="match status" value="1"/>
</dbReference>
<dbReference type="SMART" id="SM00331">
    <property type="entry name" value="PP2C_SIG"/>
    <property type="match status" value="1"/>
</dbReference>
<dbReference type="SMART" id="SM00332">
    <property type="entry name" value="PP2Cc"/>
    <property type="match status" value="1"/>
</dbReference>
<dbReference type="SUPFAM" id="SSF81606">
    <property type="entry name" value="PP2C-like"/>
    <property type="match status" value="1"/>
</dbReference>
<dbReference type="PROSITE" id="PS01032">
    <property type="entry name" value="PPM_1"/>
    <property type="match status" value="1"/>
</dbReference>
<dbReference type="PROSITE" id="PS51746">
    <property type="entry name" value="PPM_2"/>
    <property type="match status" value="1"/>
</dbReference>
<proteinExistence type="evidence at protein level"/>
<accession>Q8N3J5</accession>
<accession>B2RAZ1</accession>
<accession>Q05CT5</accession>
<accession>Q49AB5</accession>
<accession>Q4W5E6</accession>
<accession>Q56AN8</accession>
<accession>Q8IUZ7</accession>
<accession>Q8IXG7</accession>
<accession>Q8ND70</accession>
<accession>Q96NT4</accession>
<feature type="transit peptide" description="Mitochondrion" evidence="3">
    <location>
        <begin position="1"/>
        <end position="29"/>
    </location>
</feature>
<feature type="chain" id="PRO_0000278208" description="Protein phosphatase Mn(2+)-dependent 1K">
    <location>
        <begin position="30"/>
        <end position="372"/>
    </location>
</feature>
<feature type="domain" description="PPM-type phosphatase" evidence="4">
    <location>
        <begin position="94"/>
        <end position="346"/>
    </location>
</feature>
<feature type="region of interest" description="Disordered" evidence="5">
    <location>
        <begin position="34"/>
        <end position="55"/>
    </location>
</feature>
<feature type="region of interest" description="Critical for association with the BCKDH complex" evidence="11">
    <location>
        <begin position="46"/>
        <end position="61"/>
    </location>
</feature>
<feature type="binding site" evidence="23 25 26">
    <location>
        <position position="127"/>
    </location>
    <ligand>
        <name>Mn(2+)</name>
        <dbReference type="ChEBI" id="CHEBI:29035"/>
        <label>1</label>
    </ligand>
</feature>
<feature type="binding site" evidence="23 26">
    <location>
        <position position="127"/>
    </location>
    <ligand>
        <name>Mn(2+)</name>
        <dbReference type="ChEBI" id="CHEBI:29035"/>
        <label>2</label>
    </ligand>
</feature>
<feature type="binding site" evidence="23 25">
    <location>
        <position position="128"/>
    </location>
    <ligand>
        <name>Mn(2+)</name>
        <dbReference type="ChEBI" id="CHEBI:29035"/>
        <label>1</label>
    </ligand>
</feature>
<feature type="binding site" evidence="23 26">
    <location>
        <position position="298"/>
    </location>
    <ligand>
        <name>Mn(2+)</name>
        <dbReference type="ChEBI" id="CHEBI:29035"/>
        <label>2</label>
    </ligand>
</feature>
<feature type="binding site" evidence="23 26">
    <location>
        <position position="337"/>
    </location>
    <ligand>
        <name>Mn(2+)</name>
        <dbReference type="ChEBI" id="CHEBI:29035"/>
        <label>2</label>
    </ligand>
</feature>
<feature type="modified residue" description="Phosphoserine" evidence="2">
    <location>
        <position position="248"/>
    </location>
</feature>
<feature type="splice variant" id="VSP_023156" description="In isoform 3." evidence="15">
    <original>DLL</original>
    <variation>YVQ</variation>
    <location>
        <begin position="148"/>
        <end position="150"/>
    </location>
</feature>
<feature type="splice variant" id="VSP_023157" description="In isoform 3." evidence="15">
    <location>
        <begin position="151"/>
        <end position="372"/>
    </location>
</feature>
<feature type="splice variant" id="VSP_023158" description="In isoform 2." evidence="20">
    <original>ATLLTSGTTATVALLRDGIELVVASVGDSRAILCRKGKPMKLTIDHTPERKDE</original>
    <variation>ENCAWSAALDLEPVDTICGASVEREICLILSQVKESSGSYPGLREGSHISLSH</variation>
    <location>
        <begin position="181"/>
        <end position="233"/>
    </location>
</feature>
<feature type="splice variant" id="VSP_023159" description="In isoform 2." evidence="20">
    <location>
        <begin position="234"/>
        <end position="372"/>
    </location>
</feature>
<feature type="sequence variant" id="VAR_069736" description="In dbSNP:rs369916009." evidence="13">
    <original>R</original>
    <variation>H</variation>
    <location>
        <position position="26"/>
    </location>
</feature>
<feature type="sequence variant" id="VAR_030691" description="No effect on serine/threonine phosphatase activity toward BCKDHA; dbSNP:rs17853762." evidence="6 11">
    <original>N</original>
    <variation>K</variation>
    <location>
        <position position="94"/>
    </location>
</feature>
<feature type="sequence variant" id="VAR_088515" description="Constitutively increased serine/threonine phosphatase activity toward BCKDHA; dbSNP:rs11557705." evidence="11">
    <original>I</original>
    <variation>T</variation>
    <location>
        <position position="167"/>
    </location>
</feature>
<feature type="sequence variant" id="VAR_050621" description="Results in impaired serine/threonine phosphatase activity toward BCKDHA in response to high levels of branched-chain ketoacids; dbSNP:rs35523553." evidence="11">
    <original>E</original>
    <variation>K</variation>
    <location>
        <position position="321"/>
    </location>
</feature>
<feature type="mutagenesis site" description="Decreases the affinity toward BCKDHA by 61-fold. Decreases the catalytic efficiency toward BCKDHA down to 2%." evidence="10">
    <original>R</original>
    <variation>A</variation>
    <location>
        <position position="104"/>
    </location>
</feature>
<feature type="mutagenesis site" description="Loss of serine/threonine phosphatase activity toward BCKDHA." evidence="10">
    <original>D</original>
    <variation>A</variation>
    <location>
        <position position="109"/>
    </location>
</feature>
<feature type="mutagenesis site" description="Loss of serine/threonine phosphatase activity toward BCKDHA." evidence="10">
    <original>D</original>
    <variation>A</variation>
    <location>
        <position position="127"/>
    </location>
</feature>
<feature type="mutagenesis site" description="Slightly decreases the catalytic efficiency toward BCKDHA. Does not affect the interaction with DBT." evidence="9 10">
    <original>H</original>
    <variation>A</variation>
    <location>
        <position position="129"/>
    </location>
</feature>
<feature type="mutagenesis site" description="Complete loss of serine/threonine phosphatase activity toward BCKDHA. Does not affect the interaction with DBT." evidence="9">
    <original>R</original>
    <variation>G</variation>
    <location>
        <position position="236"/>
    </location>
</feature>
<feature type="mutagenesis site" description="Loss of serine/threonine phosphatase activity toward BCKDHA. Does not affect the interaction with DBT." evidence="8 9 10">
    <original>D</original>
    <variation>A</variation>
    <location>
        <position position="298"/>
    </location>
</feature>
<feature type="mutagenesis site" description="Loss of serine/threonine phosphatase activity toward BCKDHA." evidence="10">
    <original>D</original>
    <variation>A</variation>
    <location>
        <position position="337"/>
    </location>
</feature>
<feature type="sequence conflict" description="In Ref. 3; AAX77016." evidence="21" ref="3">
    <original>V</original>
    <variation>A</variation>
    <location>
        <position position="17"/>
    </location>
</feature>
<feature type="sequence conflict" description="In Ref. 3; AAX77016." evidence="21" ref="3">
    <original>L</original>
    <variation>I</variation>
    <location>
        <position position="194"/>
    </location>
</feature>
<feature type="sequence conflict" description="In Ref. 9; AAH20850." evidence="21" ref="9">
    <original>A</original>
    <variation>V</variation>
    <location>
        <position position="211"/>
    </location>
</feature>
<feature type="sequence conflict" description="In Ref. 5; BAB70790." evidence="21" ref="5">
    <original>I</original>
    <variation>V</variation>
    <location>
        <position position="264"/>
    </location>
</feature>
<feature type="helix" evidence="27">
    <location>
        <begin position="92"/>
        <end position="94"/>
    </location>
</feature>
<feature type="strand" evidence="27">
    <location>
        <begin position="96"/>
        <end position="100"/>
    </location>
</feature>
<feature type="strand" evidence="27">
    <location>
        <begin position="103"/>
        <end position="106"/>
    </location>
</feature>
<feature type="strand" evidence="27">
    <location>
        <begin position="109"/>
        <end position="115"/>
    </location>
</feature>
<feature type="strand" evidence="27">
    <location>
        <begin position="117"/>
        <end position="131"/>
    </location>
</feature>
<feature type="helix" evidence="27">
    <location>
        <begin position="133"/>
        <end position="149"/>
    </location>
</feature>
<feature type="turn" evidence="27">
    <location>
        <begin position="150"/>
        <end position="152"/>
    </location>
</feature>
<feature type="helix" evidence="27">
    <location>
        <begin position="156"/>
        <end position="176"/>
    </location>
</feature>
<feature type="helix" evidence="27">
    <location>
        <begin position="183"/>
        <end position="185"/>
    </location>
</feature>
<feature type="strand" evidence="27">
    <location>
        <begin position="190"/>
        <end position="196"/>
    </location>
</feature>
<feature type="turn" evidence="27">
    <location>
        <begin position="197"/>
        <end position="199"/>
    </location>
</feature>
<feature type="strand" evidence="27">
    <location>
        <begin position="200"/>
        <end position="208"/>
    </location>
</feature>
<feature type="strand" evidence="27">
    <location>
        <begin position="210"/>
        <end position="215"/>
    </location>
</feature>
<feature type="strand" evidence="27">
    <location>
        <begin position="218"/>
        <end position="221"/>
    </location>
</feature>
<feature type="helix" evidence="27">
    <location>
        <begin position="231"/>
        <end position="239"/>
    </location>
</feature>
<feature type="strand" evidence="27">
    <location>
        <begin position="244"/>
        <end position="246"/>
    </location>
</feature>
<feature type="strand" evidence="27">
    <location>
        <begin position="252"/>
        <end position="254"/>
    </location>
</feature>
<feature type="turn" evidence="27">
    <location>
        <begin position="255"/>
        <end position="257"/>
    </location>
</feature>
<feature type="strand" evidence="28">
    <location>
        <begin position="258"/>
        <end position="262"/>
    </location>
</feature>
<feature type="helix" evidence="27">
    <location>
        <begin position="267"/>
        <end position="269"/>
    </location>
</feature>
<feature type="turn" evidence="27">
    <location>
        <begin position="270"/>
        <end position="273"/>
    </location>
</feature>
<feature type="strand" evidence="27">
    <location>
        <begin position="279"/>
        <end position="284"/>
    </location>
</feature>
<feature type="turn" evidence="27">
    <location>
        <begin position="287"/>
        <end position="289"/>
    </location>
</feature>
<feature type="strand" evidence="27">
    <location>
        <begin position="290"/>
        <end position="296"/>
    </location>
</feature>
<feature type="helix" evidence="27">
    <location>
        <begin position="298"/>
        <end position="301"/>
    </location>
</feature>
<feature type="helix" evidence="27">
    <location>
        <begin position="306"/>
        <end position="314"/>
    </location>
</feature>
<feature type="strand" evidence="27">
    <location>
        <begin position="316"/>
        <end position="318"/>
    </location>
</feature>
<feature type="helix" evidence="27">
    <location>
        <begin position="319"/>
        <end position="332"/>
    </location>
</feature>
<feature type="strand" evidence="27">
    <location>
        <begin position="339"/>
        <end position="345"/>
    </location>
</feature>
<organism>
    <name type="scientific">Homo sapiens</name>
    <name type="common">Human</name>
    <dbReference type="NCBI Taxonomy" id="9606"/>
    <lineage>
        <taxon>Eukaryota</taxon>
        <taxon>Metazoa</taxon>
        <taxon>Chordata</taxon>
        <taxon>Craniata</taxon>
        <taxon>Vertebrata</taxon>
        <taxon>Euteleostomi</taxon>
        <taxon>Mammalia</taxon>
        <taxon>Eutheria</taxon>
        <taxon>Euarchontoglires</taxon>
        <taxon>Primates</taxon>
        <taxon>Haplorrhini</taxon>
        <taxon>Catarrhini</taxon>
        <taxon>Hominidae</taxon>
        <taxon>Homo</taxon>
    </lineage>
</organism>